<reference key="1">
    <citation type="journal article" date="1990" name="J. Biol. Chem.">
        <title>Spinach carbonic anhydrase primary structure deduced from the sequence of a cDNA clone.</title>
        <authorList>
            <person name="Fawcett T.W."/>
            <person name="Browse J.A."/>
            <person name="Volokita M."/>
            <person name="Bartlett S.G."/>
        </authorList>
    </citation>
    <scope>NUCLEOTIDE SEQUENCE [MRNA]</scope>
    <source>
        <strain>cv. Hybrid 424</strain>
    </source>
</reference>
<reference key="2">
    <citation type="journal article" date="1990" name="Plant Physiol.">
        <title>Spinach chloroplastic carbonic anhydrase: nucleotide sequence analysis of cDNA.</title>
        <authorList>
            <person name="Burnell J.N."/>
            <person name="Gibbs M.J."/>
            <person name="Mason J.G."/>
        </authorList>
    </citation>
    <scope>NUCLEOTIDE SEQUENCE [MRNA] OF 66-319</scope>
    <scope>PROTEIN SEQUENCE OF 99-118</scope>
</reference>
<reference key="3">
    <citation type="journal article" date="1984" name="Ann. N. Y. Acad. Sci.">
        <title>Origins and molecular evolution of the carbonic anhydrase isozymes.</title>
        <authorList>
            <person name="Hewett-Emmett D."/>
            <person name="Hopkins P.J."/>
            <person name="Tashian R.E."/>
            <person name="Czelusniak J."/>
        </authorList>
    </citation>
    <scope>PROTEIN SEQUENCE OF 99-118</scope>
</reference>
<keyword id="KW-0150">Chloroplast</keyword>
<keyword id="KW-0903">Direct protein sequencing</keyword>
<keyword id="KW-0456">Lyase</keyword>
<keyword id="KW-0934">Plastid</keyword>
<keyword id="KW-1185">Reference proteome</keyword>
<keyword id="KW-0809">Transit peptide</keyword>
<keyword id="KW-0862">Zinc</keyword>
<protein>
    <recommendedName>
        <fullName>Carbonic anhydrase, chloroplastic</fullName>
        <ecNumber>4.2.1.1</ecNumber>
    </recommendedName>
    <alternativeName>
        <fullName>Carbonate dehydratase</fullName>
    </alternativeName>
</protein>
<feature type="transit peptide" description="Chloroplast" evidence="1 2">
    <location>
        <begin position="1"/>
        <end position="98"/>
    </location>
</feature>
<feature type="chain" id="PRO_0000004271" description="Carbonic anhydrase, chloroplastic">
    <location>
        <begin position="99"/>
        <end position="319"/>
    </location>
</feature>
<feature type="sequence conflict" description="In Ref. 3; AA sequence." evidence="3" ref="3">
    <original>E</original>
    <variation>G</variation>
    <location>
        <position position="99"/>
    </location>
</feature>
<feature type="sequence conflict" description="In Ref. 2; AAA34026." evidence="3" ref="2">
    <original>F</original>
    <variation>S</variation>
    <location>
        <position position="222"/>
    </location>
</feature>
<feature type="sequence conflict" description="In Ref. 2; AAA34026." evidence="3" ref="2">
    <original>Y</original>
    <variation>F</variation>
    <location>
        <position position="311"/>
    </location>
</feature>
<name>CAHC_SPIOL</name>
<dbReference type="EC" id="4.2.1.1"/>
<dbReference type="EMBL" id="J05403">
    <property type="protein sequence ID" value="AAA34027.1"/>
    <property type="molecule type" value="mRNA"/>
</dbReference>
<dbReference type="EMBL" id="M27295">
    <property type="protein sequence ID" value="AAA34026.1"/>
    <property type="molecule type" value="mRNA"/>
</dbReference>
<dbReference type="PIR" id="A35163">
    <property type="entry name" value="A35163"/>
</dbReference>
<dbReference type="RefSeq" id="NP_001413387.1">
    <property type="nucleotide sequence ID" value="NM_001426458.1"/>
</dbReference>
<dbReference type="SMR" id="P16016"/>
<dbReference type="GeneID" id="110799261"/>
<dbReference type="BRENDA" id="4.2.1.1">
    <property type="organism ID" value="5812"/>
</dbReference>
<dbReference type="SABIO-RK" id="P16016"/>
<dbReference type="Proteomes" id="UP001155700">
    <property type="component" value="Unplaced"/>
</dbReference>
<dbReference type="GO" id="GO:0009570">
    <property type="term" value="C:chloroplast stroma"/>
    <property type="evidence" value="ECO:0007669"/>
    <property type="project" value="UniProtKB-SubCell"/>
</dbReference>
<dbReference type="GO" id="GO:0004089">
    <property type="term" value="F:carbonate dehydratase activity"/>
    <property type="evidence" value="ECO:0007669"/>
    <property type="project" value="UniProtKB-EC"/>
</dbReference>
<dbReference type="GO" id="GO:0008270">
    <property type="term" value="F:zinc ion binding"/>
    <property type="evidence" value="ECO:0007669"/>
    <property type="project" value="InterPro"/>
</dbReference>
<dbReference type="GO" id="GO:0015976">
    <property type="term" value="P:carbon utilization"/>
    <property type="evidence" value="ECO:0007669"/>
    <property type="project" value="InterPro"/>
</dbReference>
<dbReference type="CDD" id="cd00884">
    <property type="entry name" value="beta_CA_cladeB"/>
    <property type="match status" value="1"/>
</dbReference>
<dbReference type="FunFam" id="3.40.1050.10:FF:000002">
    <property type="entry name" value="Carbonic anhydrase"/>
    <property type="match status" value="1"/>
</dbReference>
<dbReference type="Gene3D" id="3.40.1050.10">
    <property type="entry name" value="Carbonic anhydrase"/>
    <property type="match status" value="1"/>
</dbReference>
<dbReference type="InterPro" id="IPR045066">
    <property type="entry name" value="Beta_CA_cladeB"/>
</dbReference>
<dbReference type="InterPro" id="IPR001765">
    <property type="entry name" value="Carbonic_anhydrase"/>
</dbReference>
<dbReference type="InterPro" id="IPR015892">
    <property type="entry name" value="Carbonic_anhydrase_CS"/>
</dbReference>
<dbReference type="InterPro" id="IPR036874">
    <property type="entry name" value="Carbonic_anhydrase_sf"/>
</dbReference>
<dbReference type="PANTHER" id="PTHR11002:SF56">
    <property type="entry name" value="BETA CARBONIC ANHYDRASE 2, CHLOROPLASTIC"/>
    <property type="match status" value="1"/>
</dbReference>
<dbReference type="PANTHER" id="PTHR11002">
    <property type="entry name" value="CARBONIC ANHYDRASE"/>
    <property type="match status" value="1"/>
</dbReference>
<dbReference type="Pfam" id="PF00484">
    <property type="entry name" value="Pro_CA"/>
    <property type="match status" value="1"/>
</dbReference>
<dbReference type="SMART" id="SM00947">
    <property type="entry name" value="Pro_CA"/>
    <property type="match status" value="1"/>
</dbReference>
<dbReference type="SUPFAM" id="SSF53056">
    <property type="entry name" value="beta-carbonic anhydrase, cab"/>
    <property type="match status" value="1"/>
</dbReference>
<dbReference type="PROSITE" id="PS00704">
    <property type="entry name" value="PROK_CO2_ANHYDRASE_1"/>
    <property type="match status" value="1"/>
</dbReference>
<dbReference type="PROSITE" id="PS00705">
    <property type="entry name" value="PROK_CO2_ANHYDRASE_2"/>
    <property type="match status" value="1"/>
</dbReference>
<comment type="function">
    <text>Reversible hydration of carbon dioxide.</text>
</comment>
<comment type="catalytic activity">
    <reaction>
        <text>hydrogencarbonate + H(+) = CO2 + H2O</text>
        <dbReference type="Rhea" id="RHEA:10748"/>
        <dbReference type="ChEBI" id="CHEBI:15377"/>
        <dbReference type="ChEBI" id="CHEBI:15378"/>
        <dbReference type="ChEBI" id="CHEBI:16526"/>
        <dbReference type="ChEBI" id="CHEBI:17544"/>
        <dbReference type="EC" id="4.2.1.1"/>
    </reaction>
</comment>
<comment type="subunit">
    <text>Homohexamer.</text>
</comment>
<comment type="subcellular location">
    <subcellularLocation>
        <location>Plastid</location>
        <location>Chloroplast stroma</location>
    </subcellularLocation>
</comment>
<comment type="similarity">
    <text evidence="3">Belongs to the beta-class carbonic anhydrase family.</text>
</comment>
<proteinExistence type="evidence at protein level"/>
<accession>P16016</accession>
<organism>
    <name type="scientific">Spinacia oleracea</name>
    <name type="common">Spinach</name>
    <dbReference type="NCBI Taxonomy" id="3562"/>
    <lineage>
        <taxon>Eukaryota</taxon>
        <taxon>Viridiplantae</taxon>
        <taxon>Streptophyta</taxon>
        <taxon>Embryophyta</taxon>
        <taxon>Tracheophyta</taxon>
        <taxon>Spermatophyta</taxon>
        <taxon>Magnoliopsida</taxon>
        <taxon>eudicotyledons</taxon>
        <taxon>Gunneridae</taxon>
        <taxon>Pentapetalae</taxon>
        <taxon>Caryophyllales</taxon>
        <taxon>Chenopodiaceae</taxon>
        <taxon>Chenopodioideae</taxon>
        <taxon>Anserineae</taxon>
        <taxon>Spinacia</taxon>
    </lineage>
</organism>
<evidence type="ECO:0000269" key="1">
    <source>
    </source>
</evidence>
<evidence type="ECO:0000269" key="2">
    <source>
    </source>
</evidence>
<evidence type="ECO:0000305" key="3"/>
<sequence length="319" mass="34570">MSTINGCLTSISPSRTQLKNTSTLRPTFIANSRVNPSSSVPPSLIRNQPVFAAPAPIITPTLKEDMAYEEAIAALKKLLSEKGELENEAASKVAQITSELADGGTPSASYPVQRIKEGFIKFKKEKYEKNPALYGELSKGQAPKFMVFACSDSRVCPSHVLDFQPGEAFMVRNIANMVPVFDKDKYAGVGAAIEYAVLHLKVENIVVIGHSACGGIKGLMSFPDAGPTTTDFIEDWVKICLPAKHKVLAEHGNATFAEQCTHCEKEAVNVSLGNLLTYPFVRDGLVKKTLALQGGYYDFVNGSFELWGLEYGLSPSQSV</sequence>